<proteinExistence type="inferred from homology"/>
<name>Y2648_BURVG</name>
<protein>
    <recommendedName>
        <fullName evidence="1">Nucleotide-binding protein Bcep1808_2648</fullName>
    </recommendedName>
</protein>
<feature type="chain" id="PRO_1000051723" description="Nucleotide-binding protein Bcep1808_2648">
    <location>
        <begin position="1"/>
        <end position="161"/>
    </location>
</feature>
<sequence>MPSFDVVSEANMIEVKNAIEQSNKEISTRFDFKGSDARVEQKERELTLFADDDFKLGQVKDVLIGKLAKRNVDVRFLDYGKVEKIGGDKVKQIVTVKKGVTGDLAKKIVRLVKDSKIKVQASIQGDAVRVAGTKRDDLQSVIAMLRKDVTDTPLDFNNFRD</sequence>
<keyword id="KW-0547">Nucleotide-binding</keyword>
<dbReference type="EMBL" id="CP000614">
    <property type="protein sequence ID" value="ABO55640.1"/>
    <property type="molecule type" value="Genomic_DNA"/>
</dbReference>
<dbReference type="SMR" id="A4JH87"/>
<dbReference type="KEGG" id="bvi:Bcep1808_2648"/>
<dbReference type="eggNOG" id="COG1666">
    <property type="taxonomic scope" value="Bacteria"/>
</dbReference>
<dbReference type="HOGENOM" id="CLU_099839_1_0_4"/>
<dbReference type="Proteomes" id="UP000002287">
    <property type="component" value="Chromosome 1"/>
</dbReference>
<dbReference type="GO" id="GO:0005829">
    <property type="term" value="C:cytosol"/>
    <property type="evidence" value="ECO:0007669"/>
    <property type="project" value="TreeGrafter"/>
</dbReference>
<dbReference type="GO" id="GO:0000166">
    <property type="term" value="F:nucleotide binding"/>
    <property type="evidence" value="ECO:0007669"/>
    <property type="project" value="TreeGrafter"/>
</dbReference>
<dbReference type="CDD" id="cd11740">
    <property type="entry name" value="YajQ_like"/>
    <property type="match status" value="1"/>
</dbReference>
<dbReference type="Gene3D" id="3.30.70.990">
    <property type="entry name" value="YajQ-like, domain 2"/>
    <property type="match status" value="1"/>
</dbReference>
<dbReference type="HAMAP" id="MF_00632">
    <property type="entry name" value="YajQ"/>
    <property type="match status" value="1"/>
</dbReference>
<dbReference type="InterPro" id="IPR007551">
    <property type="entry name" value="DUF520"/>
</dbReference>
<dbReference type="InterPro" id="IPR035570">
    <property type="entry name" value="UPF0234_N"/>
</dbReference>
<dbReference type="InterPro" id="IPR036183">
    <property type="entry name" value="YajQ-like_sf"/>
</dbReference>
<dbReference type="NCBIfam" id="NF003819">
    <property type="entry name" value="PRK05412.1"/>
    <property type="match status" value="1"/>
</dbReference>
<dbReference type="PANTHER" id="PTHR30476">
    <property type="entry name" value="UPF0234 PROTEIN YAJQ"/>
    <property type="match status" value="1"/>
</dbReference>
<dbReference type="PANTHER" id="PTHR30476:SF0">
    <property type="entry name" value="UPF0234 PROTEIN YAJQ"/>
    <property type="match status" value="1"/>
</dbReference>
<dbReference type="Pfam" id="PF04461">
    <property type="entry name" value="DUF520"/>
    <property type="match status" value="1"/>
</dbReference>
<dbReference type="SUPFAM" id="SSF89963">
    <property type="entry name" value="YajQ-like"/>
    <property type="match status" value="2"/>
</dbReference>
<organism>
    <name type="scientific">Burkholderia vietnamiensis (strain G4 / LMG 22486)</name>
    <name type="common">Burkholderia cepacia (strain R1808)</name>
    <dbReference type="NCBI Taxonomy" id="269482"/>
    <lineage>
        <taxon>Bacteria</taxon>
        <taxon>Pseudomonadati</taxon>
        <taxon>Pseudomonadota</taxon>
        <taxon>Betaproteobacteria</taxon>
        <taxon>Burkholderiales</taxon>
        <taxon>Burkholderiaceae</taxon>
        <taxon>Burkholderia</taxon>
        <taxon>Burkholderia cepacia complex</taxon>
    </lineage>
</organism>
<accession>A4JH87</accession>
<reference key="1">
    <citation type="submission" date="2007-03" db="EMBL/GenBank/DDBJ databases">
        <title>Complete sequence of chromosome 1 of Burkholderia vietnamiensis G4.</title>
        <authorList>
            <consortium name="US DOE Joint Genome Institute"/>
            <person name="Copeland A."/>
            <person name="Lucas S."/>
            <person name="Lapidus A."/>
            <person name="Barry K."/>
            <person name="Detter J.C."/>
            <person name="Glavina del Rio T."/>
            <person name="Hammon N."/>
            <person name="Israni S."/>
            <person name="Dalin E."/>
            <person name="Tice H."/>
            <person name="Pitluck S."/>
            <person name="Chain P."/>
            <person name="Malfatti S."/>
            <person name="Shin M."/>
            <person name="Vergez L."/>
            <person name="Schmutz J."/>
            <person name="Larimer F."/>
            <person name="Land M."/>
            <person name="Hauser L."/>
            <person name="Kyrpides N."/>
            <person name="Tiedje J."/>
            <person name="Richardson P."/>
        </authorList>
    </citation>
    <scope>NUCLEOTIDE SEQUENCE [LARGE SCALE GENOMIC DNA]</scope>
    <source>
        <strain>G4 / LMG 22486</strain>
    </source>
</reference>
<gene>
    <name type="ordered locus">Bcep1808_2648</name>
</gene>
<evidence type="ECO:0000255" key="1">
    <source>
        <dbReference type="HAMAP-Rule" id="MF_00632"/>
    </source>
</evidence>
<comment type="function">
    <text evidence="1">Nucleotide-binding protein.</text>
</comment>
<comment type="similarity">
    <text evidence="1">Belongs to the YajQ family.</text>
</comment>